<dbReference type="EMBL" id="AF017273">
    <property type="protein sequence ID" value="AAB70267.1"/>
    <property type="molecule type" value="mRNA"/>
</dbReference>
<dbReference type="EMBL" id="AF001048">
    <property type="protein sequence ID" value="AAB62322.1"/>
    <property type="molecule type" value="mRNA"/>
</dbReference>
<dbReference type="EMBL" id="BC170331">
    <property type="protein sequence ID" value="AAI70331.1"/>
    <property type="molecule type" value="mRNA"/>
</dbReference>
<dbReference type="EMBL" id="BC170333">
    <property type="protein sequence ID" value="AAI70333.1"/>
    <property type="molecule type" value="mRNA"/>
</dbReference>
<dbReference type="RefSeq" id="NP_001081687.1">
    <property type="nucleotide sequence ID" value="NM_001088218.1"/>
</dbReference>
<dbReference type="SMR" id="O42201"/>
<dbReference type="GeneID" id="397998"/>
<dbReference type="KEGG" id="xla:397998"/>
<dbReference type="AGR" id="Xenbase:XB-GENE-6252134"/>
<dbReference type="CTD" id="397998"/>
<dbReference type="Xenbase" id="XB-GENE-6252134">
    <property type="gene designation" value="rax.S"/>
</dbReference>
<dbReference type="OrthoDB" id="6159439at2759"/>
<dbReference type="Proteomes" id="UP000186698">
    <property type="component" value="Chromosome 1S"/>
</dbReference>
<dbReference type="Bgee" id="397998">
    <property type="expression patterns" value="Expressed in camera-type eye and 2 other cell types or tissues"/>
</dbReference>
<dbReference type="GO" id="GO:0005634">
    <property type="term" value="C:nucleus"/>
    <property type="evidence" value="ECO:0007669"/>
    <property type="project" value="UniProtKB-SubCell"/>
</dbReference>
<dbReference type="GO" id="GO:0000981">
    <property type="term" value="F:DNA-binding transcription factor activity, RNA polymerase II-specific"/>
    <property type="evidence" value="ECO:0000318"/>
    <property type="project" value="GO_Central"/>
</dbReference>
<dbReference type="GO" id="GO:0000978">
    <property type="term" value="F:RNA polymerase II cis-regulatory region sequence-specific DNA binding"/>
    <property type="evidence" value="ECO:0000318"/>
    <property type="project" value="GO_Central"/>
</dbReference>
<dbReference type="GO" id="GO:0045944">
    <property type="term" value="P:positive regulation of transcription by RNA polymerase II"/>
    <property type="evidence" value="ECO:0007669"/>
    <property type="project" value="InterPro"/>
</dbReference>
<dbReference type="GO" id="GO:0006357">
    <property type="term" value="P:regulation of transcription by RNA polymerase II"/>
    <property type="evidence" value="ECO:0000318"/>
    <property type="project" value="GO_Central"/>
</dbReference>
<dbReference type="CDD" id="cd00086">
    <property type="entry name" value="homeodomain"/>
    <property type="match status" value="1"/>
</dbReference>
<dbReference type="FunFam" id="1.10.10.60:FF:000071">
    <property type="entry name" value="Retinal homeobox gene 2"/>
    <property type="match status" value="1"/>
</dbReference>
<dbReference type="Gene3D" id="1.10.10.60">
    <property type="entry name" value="Homeodomain-like"/>
    <property type="match status" value="1"/>
</dbReference>
<dbReference type="InterPro" id="IPR001356">
    <property type="entry name" value="HD"/>
</dbReference>
<dbReference type="InterPro" id="IPR017970">
    <property type="entry name" value="Homeobox_CS"/>
</dbReference>
<dbReference type="InterPro" id="IPR009057">
    <property type="entry name" value="Homeodomain-like_sf"/>
</dbReference>
<dbReference type="InterPro" id="IPR003654">
    <property type="entry name" value="OAR_dom"/>
</dbReference>
<dbReference type="InterPro" id="IPR043562">
    <property type="entry name" value="RAX/RAX2"/>
</dbReference>
<dbReference type="PANTHER" id="PTHR46271">
    <property type="entry name" value="HOMEOBOX PROTEIN, PUTATIVE-RELATED"/>
    <property type="match status" value="1"/>
</dbReference>
<dbReference type="PANTHER" id="PTHR46271:SF3">
    <property type="entry name" value="RETINAL HOMEOBOX PROTEIN RX"/>
    <property type="match status" value="1"/>
</dbReference>
<dbReference type="Pfam" id="PF00046">
    <property type="entry name" value="Homeodomain"/>
    <property type="match status" value="1"/>
</dbReference>
<dbReference type="Pfam" id="PF03826">
    <property type="entry name" value="OAR"/>
    <property type="match status" value="1"/>
</dbReference>
<dbReference type="SMART" id="SM00389">
    <property type="entry name" value="HOX"/>
    <property type="match status" value="1"/>
</dbReference>
<dbReference type="SUPFAM" id="SSF46689">
    <property type="entry name" value="Homeodomain-like"/>
    <property type="match status" value="1"/>
</dbReference>
<dbReference type="PROSITE" id="PS00027">
    <property type="entry name" value="HOMEOBOX_1"/>
    <property type="match status" value="1"/>
</dbReference>
<dbReference type="PROSITE" id="PS50071">
    <property type="entry name" value="HOMEOBOX_2"/>
    <property type="match status" value="1"/>
</dbReference>
<dbReference type="PROSITE" id="PS50803">
    <property type="entry name" value="OAR"/>
    <property type="match status" value="1"/>
</dbReference>
<gene>
    <name type="primary">rax-a</name>
    <name type="synonym">rx1</name>
    <name type="synonym">rx1a</name>
</gene>
<evidence type="ECO:0000250" key="1"/>
<evidence type="ECO:0000255" key="2"/>
<evidence type="ECO:0000255" key="3">
    <source>
        <dbReference type="PROSITE-ProRule" id="PRU00108"/>
    </source>
</evidence>
<evidence type="ECO:0000255" key="4">
    <source>
        <dbReference type="PROSITE-ProRule" id="PRU00138"/>
    </source>
</evidence>
<evidence type="ECO:0000256" key="5">
    <source>
        <dbReference type="SAM" id="MobiDB-lite"/>
    </source>
</evidence>
<evidence type="ECO:0000269" key="6">
    <source>
    </source>
</evidence>
<evidence type="ECO:0000269" key="7">
    <source>
    </source>
</evidence>
<evidence type="ECO:0000305" key="8"/>
<keyword id="KW-0217">Developmental protein</keyword>
<keyword id="KW-0238">DNA-binding</keyword>
<keyword id="KW-0371">Homeobox</keyword>
<keyword id="KW-0539">Nucleus</keyword>
<keyword id="KW-1185">Reference proteome</keyword>
<keyword id="KW-0804">Transcription</keyword>
<keyword id="KW-0805">Transcription regulation</keyword>
<reference key="1">
    <citation type="journal article" date="1997" name="Mech. Dev.">
        <title>Xrx1, a novel Xenopus homeobox gene expressed during eye and pineal gland development.</title>
        <authorList>
            <person name="Casarosa S."/>
            <person name="Andreazzoli M."/>
            <person name="Simeone A."/>
            <person name="Barsacchi G."/>
        </authorList>
    </citation>
    <scope>NUCLEOTIDE SEQUENCE [MRNA]</scope>
    <scope>TISSUE SPECIFICITY</scope>
    <source>
        <tissue>Tail bud</tissue>
    </source>
</reference>
<reference key="2">
    <citation type="journal article" date="1997" name="Nature">
        <title>The Rx homeobox gene is essential for vertebrate eye development.</title>
        <authorList>
            <person name="Mathers P.H."/>
            <person name="Grinberg A."/>
            <person name="Mahon K.A."/>
            <person name="Jamrich M."/>
        </authorList>
    </citation>
    <scope>NUCLEOTIDE SEQUENCE [MRNA]</scope>
    <scope>TISSUE SPECIFICITY</scope>
    <scope>DEVELOPMENTAL STAGE</scope>
    <source>
        <tissue>Ectoderm</tissue>
    </source>
</reference>
<reference key="3">
    <citation type="submission" date="2008-11" db="EMBL/GenBank/DDBJ databases">
        <authorList>
            <consortium name="NIH - Xenopus Gene Collection (XGC) project"/>
        </authorList>
    </citation>
    <scope>NUCLEOTIDE SEQUENCE [LARGE SCALE MRNA]</scope>
    <source>
        <tissue>Oocyte</tissue>
    </source>
</reference>
<protein>
    <recommendedName>
        <fullName>Retinal homeobox protein Rx-A</fullName>
        <shortName>Rx1A</shortName>
        <shortName>Xrx1</shortName>
    </recommendedName>
    <alternativeName>
        <fullName>Retina and anterior neural fold homeobox protein A</fullName>
    </alternativeName>
</protein>
<feature type="chain" id="PRO_0000049278" description="Retinal homeobox protein Rx-A">
    <location>
        <begin position="1"/>
        <end position="322"/>
    </location>
</feature>
<feature type="DNA-binding region" description="Homeobox" evidence="3">
    <location>
        <begin position="130"/>
        <end position="189"/>
    </location>
</feature>
<feature type="region of interest" description="Disordered" evidence="5">
    <location>
        <begin position="75"/>
        <end position="136"/>
    </location>
</feature>
<feature type="short sequence motif" description="Octapeptide motif">
    <location>
        <begin position="32"/>
        <end position="39"/>
    </location>
</feature>
<feature type="short sequence motif" description="OAR" evidence="4">
    <location>
        <begin position="302"/>
        <end position="315"/>
    </location>
</feature>
<feature type="short sequence motif" description="Nuclear localization signal" evidence="2">
    <location>
        <begin position="308"/>
        <end position="312"/>
    </location>
</feature>
<feature type="compositionally biased region" description="Basic and acidic residues" evidence="5">
    <location>
        <begin position="75"/>
        <end position="87"/>
    </location>
</feature>
<feature type="compositionally biased region" description="Polar residues" evidence="5">
    <location>
        <begin position="100"/>
        <end position="117"/>
    </location>
</feature>
<feature type="sequence conflict" description="In Ref. 1; AAB70267." evidence="8" ref="1">
    <original>T</original>
    <variation>A</variation>
    <location>
        <position position="90"/>
    </location>
</feature>
<feature type="sequence conflict" description="In Ref. 1; AAB70267." evidence="8" ref="1">
    <original>L</original>
    <variation>S</variation>
    <location>
        <position position="98"/>
    </location>
</feature>
<name>RXA_XENLA</name>
<organism>
    <name type="scientific">Xenopus laevis</name>
    <name type="common">African clawed frog</name>
    <dbReference type="NCBI Taxonomy" id="8355"/>
    <lineage>
        <taxon>Eukaryota</taxon>
        <taxon>Metazoa</taxon>
        <taxon>Chordata</taxon>
        <taxon>Craniata</taxon>
        <taxon>Vertebrata</taxon>
        <taxon>Euteleostomi</taxon>
        <taxon>Amphibia</taxon>
        <taxon>Batrachia</taxon>
        <taxon>Anura</taxon>
        <taxon>Pipoidea</taxon>
        <taxon>Pipidae</taxon>
        <taxon>Xenopodinae</taxon>
        <taxon>Xenopus</taxon>
        <taxon>Xenopus</taxon>
    </lineage>
</organism>
<sequence>MHLHSPSLMADGSFSLSGHLLRSPGGNPSRLHSIEAILGFVKEDSVLGSFQSEISPRNAKEVDKRSSRHCLHKMTEEIHPQQEHLEDGQTDGYGDPYLGKTSSECLSPGLSTSNSDNKLSDDEQQPKKKHRRNRTTFTTYQLHELERAFEKSHYPDVYSREELAMKVNLPEVRVQVWFQNRRAKWRRQEKLEVTSMKLQDSPMLSFNRSPQPSAMSALSSSLPLDSWLTPTLSNSTALQSLPGFVTTPPSLPGSYTPPPFINPVSVGHALQPLGAMGPPPPYQCGANFVDKYPLEETDPRNNSIASLRMKAKEHIQFIGKPW</sequence>
<comment type="function">
    <text evidence="1">Plays a critical role in eye formation by regulating the initial specification of retinal cells and/or their subsequent proliferation.</text>
</comment>
<comment type="subcellular location">
    <subcellularLocation>
        <location evidence="3 4">Nucleus</location>
    </subcellularLocation>
</comment>
<comment type="tissue specificity">
    <text evidence="6 7">Highly expressed in anterior neural plate followed by neural retina, pigmented epithelium, in pineal gland, diencephalon floor and epiphysis. At later stages, the neuroretina remains the primary site of expression. No expression in the developing lens and cornea.</text>
</comment>
<comment type="developmental stage">
    <text evidence="7">Expression begins in stage 11 (late-gastrula) embryos and then appears to be maintained at fairly stable levels up to stage 45 (late tadpole), when it declines.</text>
</comment>
<comment type="similarity">
    <text evidence="8">Belongs to the paired homeobox family. Bicoid subfamily.</text>
</comment>
<comment type="caution">
    <text evidence="8">It is uncertain whether Met-1 or Met-9 is the initiator.</text>
</comment>
<accession>O42201</accession>
<accession>B7ZRY4</accession>
<accession>O42566</accession>
<proteinExistence type="evidence at transcript level"/>